<feature type="chain" id="PRO_0000097064" description="P840 reaction center 17 kDa protein">
    <location>
        <begin position="1"/>
        <end position="143"/>
    </location>
</feature>
<feature type="region of interest" description="Disordered" evidence="1">
    <location>
        <begin position="1"/>
        <end position="25"/>
    </location>
</feature>
<feature type="compositionally biased region" description="Polar residues" evidence="1">
    <location>
        <begin position="1"/>
        <end position="23"/>
    </location>
</feature>
<accession>Q46139</accession>
<gene>
    <name type="primary">pscD</name>
</gene>
<evidence type="ECO:0000256" key="1">
    <source>
        <dbReference type="SAM" id="MobiDB-lite"/>
    </source>
</evidence>
<name>PSCD_CHLTI</name>
<sequence length="143" mass="16520">MQPQLSRPQTATNQVRNSVSGPWSGNAAHKAEKYFITSAKRDRNDKLQIEIMPSSGRRKLSPTPEMIPKLIDGEIEIYVLTTQPDIAIDLGKQVIDMENRYVIDFDKRGVKWTMRDIPVFYREGKGLCVELDNRIYTLNEFFK</sequence>
<comment type="subunit">
    <text>Component of the P840 reaction center.</text>
</comment>
<proteinExistence type="predicted"/>
<protein>
    <recommendedName>
        <fullName>P840 reaction center 17 kDa protein</fullName>
    </recommendedName>
</protein>
<reference key="1">
    <citation type="journal article" date="1995" name="Biochemistry">
        <title>Stable photobleaching of P840 in Chlorobium reaction center preparations: presence of the 42-kDa bacteriochlorophyll a protein and a 17-kDa polypeptide.</title>
        <authorList>
            <person name="Hager-Braun C."/>
            <person name="Xie D.L."/>
            <person name="Jarosch U."/>
            <person name="Herold E."/>
            <person name="Buttner M."/>
            <person name="Zimmermann R."/>
            <person name="Deutzmann R."/>
            <person name="Hauska G."/>
            <person name="Nelson N."/>
        </authorList>
    </citation>
    <scope>NUCLEOTIDE SEQUENCE [GENOMIC DNA]</scope>
</reference>
<keyword id="KW-0249">Electron transport</keyword>
<keyword id="KW-0602">Photosynthesis</keyword>
<keyword id="KW-0674">Reaction center</keyword>
<keyword id="KW-0813">Transport</keyword>
<organism>
    <name type="scientific">Chlorobaculum thiosulfatiphilum</name>
    <name type="common">Chlorobium limicola f.sp. thiosulfatophilum</name>
    <dbReference type="NCBI Taxonomy" id="115852"/>
    <lineage>
        <taxon>Bacteria</taxon>
        <taxon>Pseudomonadati</taxon>
        <taxon>Chlorobiota</taxon>
        <taxon>Chlorobiia</taxon>
        <taxon>Chlorobiales</taxon>
        <taxon>Chlorobiaceae</taxon>
        <taxon>Chlorobaculum</taxon>
    </lineage>
</organism>
<dbReference type="EMBL" id="X83528">
    <property type="protein sequence ID" value="CAA58509.1"/>
    <property type="molecule type" value="Genomic_DNA"/>
</dbReference>
<dbReference type="PIR" id="S51144">
    <property type="entry name" value="S51144"/>
</dbReference>
<dbReference type="SMR" id="Q46139"/>
<dbReference type="GO" id="GO:0015979">
    <property type="term" value="P:photosynthesis"/>
    <property type="evidence" value="ECO:0007669"/>
    <property type="project" value="UniProtKB-KW"/>
</dbReference>
<dbReference type="InterPro" id="IPR019608">
    <property type="entry name" value="PSI_P840_PscD"/>
</dbReference>
<dbReference type="Pfam" id="PF10657">
    <property type="entry name" value="RC-P840_PscD"/>
    <property type="match status" value="1"/>
</dbReference>